<feature type="chain" id="PRO_0000112757" description="Acetylornithine aminotransferase">
    <location>
        <begin position="1"/>
        <end position="400"/>
    </location>
</feature>
<feature type="binding site" evidence="1">
    <location>
        <begin position="113"/>
        <end position="114"/>
    </location>
    <ligand>
        <name>pyridoxal 5'-phosphate</name>
        <dbReference type="ChEBI" id="CHEBI:597326"/>
    </ligand>
</feature>
<feature type="binding site" evidence="1">
    <location>
        <position position="139"/>
    </location>
    <ligand>
        <name>pyridoxal 5'-phosphate</name>
        <dbReference type="ChEBI" id="CHEBI:597326"/>
    </ligand>
</feature>
<feature type="binding site" evidence="1">
    <location>
        <position position="142"/>
    </location>
    <ligand>
        <name>N(2)-acetyl-L-ornithine</name>
        <dbReference type="ChEBI" id="CHEBI:57805"/>
    </ligand>
</feature>
<feature type="binding site" evidence="1">
    <location>
        <begin position="224"/>
        <end position="227"/>
    </location>
    <ligand>
        <name>pyridoxal 5'-phosphate</name>
        <dbReference type="ChEBI" id="CHEBI:597326"/>
    </ligand>
</feature>
<feature type="binding site" evidence="1">
    <location>
        <position position="281"/>
    </location>
    <ligand>
        <name>N(2)-acetyl-L-ornithine</name>
        <dbReference type="ChEBI" id="CHEBI:57805"/>
    </ligand>
</feature>
<feature type="binding site" evidence="1">
    <location>
        <position position="282"/>
    </location>
    <ligand>
        <name>pyridoxal 5'-phosphate</name>
        <dbReference type="ChEBI" id="CHEBI:597326"/>
    </ligand>
</feature>
<feature type="modified residue" description="N6-(pyridoxal phosphate)lysine" evidence="1">
    <location>
        <position position="253"/>
    </location>
</feature>
<keyword id="KW-0028">Amino-acid biosynthesis</keyword>
<keyword id="KW-0032">Aminotransferase</keyword>
<keyword id="KW-0055">Arginine biosynthesis</keyword>
<keyword id="KW-0963">Cytoplasm</keyword>
<keyword id="KW-0663">Pyridoxal phosphate</keyword>
<keyword id="KW-1185">Reference proteome</keyword>
<keyword id="KW-0808">Transferase</keyword>
<sequence>MTGASTTTATMRQRWQAVMMNNYGTPPIALASGDGAVVTDVDGRTYIDLLGGIAVNVLGHRHPAVIEAVTRQMSTLGHTSNLYATEPGIALAEELVALLGADQRTRVFFCNSGAEANEAAFKLSRLTGRTKLVAAHDAFHGRTMGSLALTGQPAKQTPFAPLPGDVTHVGYGDVDALAAAVDDHTAAVFLEPIMGESGVVVPPAGYLAAARDITARRGALLVLDEVQTGMGRTGAFFAHQHDGITPDVVTLAKGLGGGLPIGACLAVGPAAELLTPGLHGSTFGGNPVCAAAALAVLRVLASDGLVRRAEVLGKSLRHGIEALGHPLIDHVRGRGLLLGIALTAPHAKDAEATARDAGYLVNAAAPDVIRLAPPLIIAEAQLDGFVAALPAILDRAVGAP</sequence>
<organism>
    <name type="scientific">Mycobacterium bovis (strain ATCC BAA-935 / AF2122/97)</name>
    <dbReference type="NCBI Taxonomy" id="233413"/>
    <lineage>
        <taxon>Bacteria</taxon>
        <taxon>Bacillati</taxon>
        <taxon>Actinomycetota</taxon>
        <taxon>Actinomycetes</taxon>
        <taxon>Mycobacteriales</taxon>
        <taxon>Mycobacteriaceae</taxon>
        <taxon>Mycobacterium</taxon>
        <taxon>Mycobacterium tuberculosis complex</taxon>
    </lineage>
</organism>
<comment type="catalytic activity">
    <reaction evidence="1">
        <text>N(2)-acetyl-L-ornithine + 2-oxoglutarate = N-acetyl-L-glutamate 5-semialdehyde + L-glutamate</text>
        <dbReference type="Rhea" id="RHEA:18049"/>
        <dbReference type="ChEBI" id="CHEBI:16810"/>
        <dbReference type="ChEBI" id="CHEBI:29123"/>
        <dbReference type="ChEBI" id="CHEBI:29985"/>
        <dbReference type="ChEBI" id="CHEBI:57805"/>
        <dbReference type="EC" id="2.6.1.11"/>
    </reaction>
</comment>
<comment type="cofactor">
    <cofactor evidence="1">
        <name>pyridoxal 5'-phosphate</name>
        <dbReference type="ChEBI" id="CHEBI:597326"/>
    </cofactor>
    <text evidence="1">Binds 1 pyridoxal phosphate per subunit.</text>
</comment>
<comment type="pathway">
    <text evidence="1">Amino-acid biosynthesis; L-arginine biosynthesis; N(2)-acetyl-L-ornithine from L-glutamate: step 4/4.</text>
</comment>
<comment type="subunit">
    <text evidence="1">Homodimer.</text>
</comment>
<comment type="subcellular location">
    <subcellularLocation>
        <location evidence="1">Cytoplasm</location>
    </subcellularLocation>
</comment>
<comment type="miscellaneous">
    <text evidence="1">May also have succinyldiaminopimelate aminotransferase activity, thus carrying out the corresponding step in lysine biosynthesis.</text>
</comment>
<comment type="similarity">
    <text evidence="1">Belongs to the class-III pyridoxal-phosphate-dependent aminotransferase family. ArgD subfamily.</text>
</comment>
<evidence type="ECO:0000255" key="1">
    <source>
        <dbReference type="HAMAP-Rule" id="MF_01107"/>
    </source>
</evidence>
<name>ARGD_MYCBO</name>
<dbReference type="EC" id="2.6.1.11" evidence="1"/>
<dbReference type="EMBL" id="LT708304">
    <property type="protein sequence ID" value="SIU00286.1"/>
    <property type="molecule type" value="Genomic_DNA"/>
</dbReference>
<dbReference type="RefSeq" id="NP_855335.1">
    <property type="nucleotide sequence ID" value="NC_002945.3"/>
</dbReference>
<dbReference type="RefSeq" id="WP_003408163.1">
    <property type="nucleotide sequence ID" value="NC_002945.4"/>
</dbReference>
<dbReference type="SMR" id="P63569"/>
<dbReference type="KEGG" id="mbo:BQ2027_MB1683"/>
<dbReference type="PATRIC" id="fig|233413.5.peg.1836"/>
<dbReference type="UniPathway" id="UPA00068">
    <property type="reaction ID" value="UER00109"/>
</dbReference>
<dbReference type="Proteomes" id="UP000001419">
    <property type="component" value="Chromosome"/>
</dbReference>
<dbReference type="GO" id="GO:0005737">
    <property type="term" value="C:cytoplasm"/>
    <property type="evidence" value="ECO:0007669"/>
    <property type="project" value="UniProtKB-SubCell"/>
</dbReference>
<dbReference type="GO" id="GO:0042802">
    <property type="term" value="F:identical protein binding"/>
    <property type="evidence" value="ECO:0007669"/>
    <property type="project" value="TreeGrafter"/>
</dbReference>
<dbReference type="GO" id="GO:0003992">
    <property type="term" value="F:N2-acetyl-L-ornithine:2-oxoglutarate 5-aminotransferase activity"/>
    <property type="evidence" value="ECO:0007669"/>
    <property type="project" value="UniProtKB-UniRule"/>
</dbReference>
<dbReference type="GO" id="GO:0030170">
    <property type="term" value="F:pyridoxal phosphate binding"/>
    <property type="evidence" value="ECO:0007669"/>
    <property type="project" value="InterPro"/>
</dbReference>
<dbReference type="GO" id="GO:0006526">
    <property type="term" value="P:L-arginine biosynthetic process"/>
    <property type="evidence" value="ECO:0007669"/>
    <property type="project" value="UniProtKB-UniRule"/>
</dbReference>
<dbReference type="CDD" id="cd00610">
    <property type="entry name" value="OAT_like"/>
    <property type="match status" value="1"/>
</dbReference>
<dbReference type="FunFam" id="3.40.640.10:FF:000004">
    <property type="entry name" value="Acetylornithine aminotransferase"/>
    <property type="match status" value="1"/>
</dbReference>
<dbReference type="Gene3D" id="3.90.1150.10">
    <property type="entry name" value="Aspartate Aminotransferase, domain 1"/>
    <property type="match status" value="1"/>
</dbReference>
<dbReference type="Gene3D" id="3.40.640.10">
    <property type="entry name" value="Type I PLP-dependent aspartate aminotransferase-like (Major domain)"/>
    <property type="match status" value="1"/>
</dbReference>
<dbReference type="HAMAP" id="MF_01107">
    <property type="entry name" value="ArgD_aminotrans_3"/>
    <property type="match status" value="1"/>
</dbReference>
<dbReference type="InterPro" id="IPR004636">
    <property type="entry name" value="AcOrn/SuccOrn_fam"/>
</dbReference>
<dbReference type="InterPro" id="IPR005814">
    <property type="entry name" value="Aminotrans_3"/>
</dbReference>
<dbReference type="InterPro" id="IPR049704">
    <property type="entry name" value="Aminotrans_3_PPA_site"/>
</dbReference>
<dbReference type="InterPro" id="IPR050103">
    <property type="entry name" value="Class-III_PLP-dep_AT"/>
</dbReference>
<dbReference type="InterPro" id="IPR015424">
    <property type="entry name" value="PyrdxlP-dep_Trfase"/>
</dbReference>
<dbReference type="InterPro" id="IPR015421">
    <property type="entry name" value="PyrdxlP-dep_Trfase_major"/>
</dbReference>
<dbReference type="InterPro" id="IPR015422">
    <property type="entry name" value="PyrdxlP-dep_Trfase_small"/>
</dbReference>
<dbReference type="NCBIfam" id="TIGR00707">
    <property type="entry name" value="argD"/>
    <property type="match status" value="1"/>
</dbReference>
<dbReference type="NCBIfam" id="NF002874">
    <property type="entry name" value="PRK03244.1"/>
    <property type="match status" value="1"/>
</dbReference>
<dbReference type="PANTHER" id="PTHR11986:SF79">
    <property type="entry name" value="ACETYLORNITHINE AMINOTRANSFERASE, MITOCHONDRIAL"/>
    <property type="match status" value="1"/>
</dbReference>
<dbReference type="PANTHER" id="PTHR11986">
    <property type="entry name" value="AMINOTRANSFERASE CLASS III"/>
    <property type="match status" value="1"/>
</dbReference>
<dbReference type="Pfam" id="PF00202">
    <property type="entry name" value="Aminotran_3"/>
    <property type="match status" value="1"/>
</dbReference>
<dbReference type="PIRSF" id="PIRSF000521">
    <property type="entry name" value="Transaminase_4ab_Lys_Orn"/>
    <property type="match status" value="1"/>
</dbReference>
<dbReference type="SUPFAM" id="SSF53383">
    <property type="entry name" value="PLP-dependent transferases"/>
    <property type="match status" value="1"/>
</dbReference>
<dbReference type="PROSITE" id="PS00600">
    <property type="entry name" value="AA_TRANSFER_CLASS_3"/>
    <property type="match status" value="1"/>
</dbReference>
<proteinExistence type="inferred from homology"/>
<gene>
    <name evidence="1" type="primary">argD</name>
    <name type="ordered locus">BQ2027_MB1683</name>
</gene>
<accession>P63569</accession>
<accession>A0A1R3XZA9</accession>
<accession>P94990</accession>
<accession>X2BIK4</accession>
<protein>
    <recommendedName>
        <fullName evidence="1">Acetylornithine aminotransferase</fullName>
        <shortName evidence="1">ACOAT</shortName>
        <ecNumber evidence="1">2.6.1.11</ecNumber>
    </recommendedName>
</protein>
<reference key="1">
    <citation type="journal article" date="2003" name="Proc. Natl. Acad. Sci. U.S.A.">
        <title>The complete genome sequence of Mycobacterium bovis.</title>
        <authorList>
            <person name="Garnier T."/>
            <person name="Eiglmeier K."/>
            <person name="Camus J.-C."/>
            <person name="Medina N."/>
            <person name="Mansoor H."/>
            <person name="Pryor M."/>
            <person name="Duthoy S."/>
            <person name="Grondin S."/>
            <person name="Lacroix C."/>
            <person name="Monsempe C."/>
            <person name="Simon S."/>
            <person name="Harris B."/>
            <person name="Atkin R."/>
            <person name="Doggett J."/>
            <person name="Mayes R."/>
            <person name="Keating L."/>
            <person name="Wheeler P.R."/>
            <person name="Parkhill J."/>
            <person name="Barrell B.G."/>
            <person name="Cole S.T."/>
            <person name="Gordon S.V."/>
            <person name="Hewinson R.G."/>
        </authorList>
    </citation>
    <scope>NUCLEOTIDE SEQUENCE [LARGE SCALE GENOMIC DNA]</scope>
    <source>
        <strain>ATCC BAA-935 / AF2122/97</strain>
    </source>
</reference>
<reference key="2">
    <citation type="journal article" date="2017" name="Genome Announc.">
        <title>Updated reference genome sequence and annotation of Mycobacterium bovis AF2122/97.</title>
        <authorList>
            <person name="Malone K.M."/>
            <person name="Farrell D."/>
            <person name="Stuber T.P."/>
            <person name="Schubert O.T."/>
            <person name="Aebersold R."/>
            <person name="Robbe-Austerman S."/>
            <person name="Gordon S.V."/>
        </authorList>
    </citation>
    <scope>NUCLEOTIDE SEQUENCE [LARGE SCALE GENOMIC DNA]</scope>
    <scope>GENOME REANNOTATION</scope>
    <source>
        <strain>ATCC BAA-935 / AF2122/97</strain>
    </source>
</reference>